<dbReference type="EMBL" id="CR760483">
    <property type="protein sequence ID" value="CAJ83072.1"/>
    <property type="molecule type" value="mRNA"/>
</dbReference>
<dbReference type="EMBL" id="BC155375">
    <property type="protein sequence ID" value="AAI55376.1"/>
    <property type="molecule type" value="mRNA"/>
</dbReference>
<dbReference type="RefSeq" id="NP_001037897.1">
    <property type="nucleotide sequence ID" value="NM_001044432.1"/>
</dbReference>
<dbReference type="SMR" id="Q28IC1"/>
<dbReference type="FunCoup" id="Q28IC1">
    <property type="interactions" value="1668"/>
</dbReference>
<dbReference type="STRING" id="8364.ENSXETP00000018267"/>
<dbReference type="PaxDb" id="8364-ENSXETP00000053380"/>
<dbReference type="GeneID" id="733497"/>
<dbReference type="KEGG" id="xtr:733497"/>
<dbReference type="AGR" id="Xenbase:XB-GENE-5779332"/>
<dbReference type="CTD" id="91582"/>
<dbReference type="Xenbase" id="XB-GENE-5779332">
    <property type="gene designation" value="rps19bp1"/>
</dbReference>
<dbReference type="HOGENOM" id="CLU_194935_0_0_1"/>
<dbReference type="InParanoid" id="Q28IC1"/>
<dbReference type="OMA" id="KFQREYF"/>
<dbReference type="OrthoDB" id="6493910at2759"/>
<dbReference type="Proteomes" id="UP000008143">
    <property type="component" value="Chromosome 4"/>
</dbReference>
<dbReference type="Bgee" id="ENSXETG00000037536">
    <property type="expression patterns" value="Expressed in early embryo and 15 other cell types or tissues"/>
</dbReference>
<dbReference type="GO" id="GO:0005730">
    <property type="term" value="C:nucleolus"/>
    <property type="evidence" value="ECO:0007669"/>
    <property type="project" value="UniProtKB-SubCell"/>
</dbReference>
<dbReference type="GO" id="GO:0032040">
    <property type="term" value="C:small-subunit processome"/>
    <property type="evidence" value="ECO:0000250"/>
    <property type="project" value="UniProtKB"/>
</dbReference>
<dbReference type="GO" id="GO:0042274">
    <property type="term" value="P:ribosomal small subunit biogenesis"/>
    <property type="evidence" value="ECO:0000250"/>
    <property type="project" value="UniProtKB"/>
</dbReference>
<dbReference type="InterPro" id="IPR023262">
    <property type="entry name" value="AROS"/>
</dbReference>
<dbReference type="PANTHER" id="PTHR31454">
    <property type="entry name" value="ACTIVE REGULATOR OF SIRT1"/>
    <property type="match status" value="1"/>
</dbReference>
<dbReference type="PANTHER" id="PTHR31454:SF2">
    <property type="entry name" value="ACTIVE REGULATOR OF SIRT1"/>
    <property type="match status" value="1"/>
</dbReference>
<dbReference type="Pfam" id="PF15684">
    <property type="entry name" value="AROS"/>
    <property type="match status" value="1"/>
</dbReference>
<dbReference type="PRINTS" id="PR02029">
    <property type="entry name" value="ACTREGSIRT1"/>
</dbReference>
<accession>Q28IC1</accession>
<proteinExistence type="evidence at transcript level"/>
<protein>
    <recommendedName>
        <fullName>Active regulator of SIRT1</fullName>
    </recommendedName>
    <alternativeName>
        <fullName>40S ribosomal protein S19-binding protein 1</fullName>
        <shortName>RPS19-binding protein 1</shortName>
        <shortName>S19BP</shortName>
    </alternativeName>
</protein>
<feature type="chain" id="PRO_0000361539" description="Active regulator of SIRT1">
    <location>
        <begin position="1"/>
        <end position="149"/>
    </location>
</feature>
<feature type="region of interest" description="Disordered" evidence="3">
    <location>
        <begin position="1"/>
        <end position="64"/>
    </location>
</feature>
<feature type="compositionally biased region" description="Basic and acidic residues" evidence="3">
    <location>
        <begin position="8"/>
        <end position="19"/>
    </location>
</feature>
<feature type="compositionally biased region" description="Low complexity" evidence="3">
    <location>
        <begin position="30"/>
        <end position="41"/>
    </location>
</feature>
<feature type="compositionally biased region" description="Basic residues" evidence="3">
    <location>
        <begin position="43"/>
        <end position="52"/>
    </location>
</feature>
<reference key="1">
    <citation type="submission" date="2006-10" db="EMBL/GenBank/DDBJ databases">
        <authorList>
            <consortium name="Sanger Xenopus tropicalis EST/cDNA project"/>
        </authorList>
    </citation>
    <scope>NUCLEOTIDE SEQUENCE [LARGE SCALE MRNA]</scope>
    <source>
        <tissue>Neurula</tissue>
    </source>
</reference>
<reference key="2">
    <citation type="submission" date="2007-11" db="EMBL/GenBank/DDBJ databases">
        <authorList>
            <consortium name="NIH - Xenopus Gene Collection (XGC) project"/>
        </authorList>
    </citation>
    <scope>NUCLEOTIDE SEQUENCE [LARGE SCALE MRNA]</scope>
    <source>
        <strain>N6</strain>
        <tissue>Oviduct</tissue>
    </source>
</reference>
<name>AROS_XENTR</name>
<gene>
    <name type="primary">rps19bp1</name>
    <name type="synonym">aros</name>
    <name type="ORF">TNeu074g06.1</name>
</gene>
<organism>
    <name type="scientific">Xenopus tropicalis</name>
    <name type="common">Western clawed frog</name>
    <name type="synonym">Silurana tropicalis</name>
    <dbReference type="NCBI Taxonomy" id="8364"/>
    <lineage>
        <taxon>Eukaryota</taxon>
        <taxon>Metazoa</taxon>
        <taxon>Chordata</taxon>
        <taxon>Craniata</taxon>
        <taxon>Vertebrata</taxon>
        <taxon>Euteleostomi</taxon>
        <taxon>Amphibia</taxon>
        <taxon>Batrachia</taxon>
        <taxon>Anura</taxon>
        <taxon>Pipoidea</taxon>
        <taxon>Pipidae</taxon>
        <taxon>Xenopodinae</taxon>
        <taxon>Xenopus</taxon>
        <taxon>Silurana</taxon>
    </lineage>
</organism>
<keyword id="KW-0539">Nucleus</keyword>
<keyword id="KW-1185">Reference proteome</keyword>
<comment type="function">
    <text evidence="2">Part of the small subunit (SSU) processome, first precursor of the small eukaryotic ribosomal subunit. During the assembly of the SSU processome in the nucleolus, many ribosome biogenesis factors, an RNA chaperone and ribosomal proteins associate with the nascent pre-rRNA and work in concert to generate RNA folding, modifications, rearrangements and cleavage as well as targeted degradation of pre-ribosomal RNA by the RNA exosome. Acts as a chaperone that specifically mediates the integration of RPS19 in state post-A1. Direct regulator of SIRT1.</text>
</comment>
<comment type="subunit">
    <text evidence="2">Part of the small subunit (SSU) processome, composed of more than 70 proteins and the RNA chaperone small nucleolar RNA (snoRNA) U3.</text>
</comment>
<comment type="subcellular location">
    <subcellularLocation>
        <location evidence="1">Nucleus</location>
        <location evidence="1">Nucleolus</location>
    </subcellularLocation>
</comment>
<comment type="similarity">
    <text evidence="4">Belongs to the AROS family.</text>
</comment>
<evidence type="ECO:0000250" key="1"/>
<evidence type="ECO:0000250" key="2">
    <source>
        <dbReference type="UniProtKB" id="Q86WX3"/>
    </source>
</evidence>
<evidence type="ECO:0000256" key="3">
    <source>
        <dbReference type="SAM" id="MobiDB-lite"/>
    </source>
</evidence>
<evidence type="ECO:0000305" key="4"/>
<sequence>MSVSLLRKGLDLLREERSGAESSSKKRNSSSKPKPCLSSSKTGMRKQLRRLKQQGLRHDQKATAKGRVIRSAVEEFKKQSAKDHLQQNLQYMLDSSSVTSKEVVDKILKQNRGRKAKDIEIKQHRQIKEKSVFSDADFKRFELEYFGSK</sequence>